<proteinExistence type="evidence at transcript level"/>
<evidence type="ECO:0000250" key="1"/>
<evidence type="ECO:0000255" key="2"/>
<evidence type="ECO:0000255" key="3">
    <source>
        <dbReference type="PROSITE-ProRule" id="PRU00521"/>
    </source>
</evidence>
<sequence>HSSWYNRLFSNSGTICYVGLVWVLALGAILPNLFVGSLRCDPRIFSCTFAQYVSSYYTIAVVIFHFFLPIGVVSYCYLRIWVLVLNIRHRVKPDRHLHHQTWPYNIHGFITMFVVFVLFAVCWGPLNIIGLTVAIYPPLGDSIPQWLFVASYF</sequence>
<organism>
    <name type="scientific">Xenopus laevis</name>
    <name type="common">African clawed frog</name>
    <dbReference type="NCBI Taxonomy" id="8355"/>
    <lineage>
        <taxon>Eukaryota</taxon>
        <taxon>Metazoa</taxon>
        <taxon>Chordata</taxon>
        <taxon>Craniata</taxon>
        <taxon>Vertebrata</taxon>
        <taxon>Euteleostomi</taxon>
        <taxon>Amphibia</taxon>
        <taxon>Batrachia</taxon>
        <taxon>Anura</taxon>
        <taxon>Pipoidea</taxon>
        <taxon>Pipidae</taxon>
        <taxon>Xenopodinae</taxon>
        <taxon>Xenopus</taxon>
        <taxon>Xenopus</taxon>
    </lineage>
</organism>
<reference key="1">
    <citation type="journal article" date="1995" name="Neuron">
        <title>Melatonin receptors are for the birds: molecular analysis of two receptor subtypes differentially expressed in chick brain.</title>
        <authorList>
            <person name="Reppert S.M."/>
            <person name="Weaver D.R."/>
            <person name="Cassone V.M."/>
            <person name="Godson C."/>
            <person name="Kolakowski L.F. Jr."/>
        </authorList>
    </citation>
    <scope>NUCLEOTIDE SEQUENCE [MRNA]</scope>
</reference>
<accession>P51048</accession>
<dbReference type="EMBL" id="U31826">
    <property type="protein sequence ID" value="AAA92500.1"/>
    <property type="molecule type" value="mRNA"/>
</dbReference>
<dbReference type="SMR" id="P51048"/>
<dbReference type="AGR" id="Xenbase:XB-GENE-5911705"/>
<dbReference type="Xenbase" id="XB-GENE-5911705">
    <property type="gene designation" value="mtnr1al.L"/>
</dbReference>
<dbReference type="Proteomes" id="UP000186698">
    <property type="component" value="Unplaced"/>
</dbReference>
<dbReference type="GO" id="GO:0005886">
    <property type="term" value="C:plasma membrane"/>
    <property type="evidence" value="ECO:0000318"/>
    <property type="project" value="GO_Central"/>
</dbReference>
<dbReference type="GO" id="GO:0004930">
    <property type="term" value="F:G protein-coupled receptor activity"/>
    <property type="evidence" value="ECO:0000318"/>
    <property type="project" value="GO_Central"/>
</dbReference>
<dbReference type="GO" id="GO:0008502">
    <property type="term" value="F:melatonin receptor activity"/>
    <property type="evidence" value="ECO:0007669"/>
    <property type="project" value="InterPro"/>
</dbReference>
<dbReference type="GO" id="GO:0007186">
    <property type="term" value="P:G protein-coupled receptor signaling pathway"/>
    <property type="evidence" value="ECO:0000318"/>
    <property type="project" value="GO_Central"/>
</dbReference>
<dbReference type="Gene3D" id="1.20.1070.10">
    <property type="entry name" value="Rhodopsin 7-helix transmembrane proteins"/>
    <property type="match status" value="1"/>
</dbReference>
<dbReference type="InterPro" id="IPR000276">
    <property type="entry name" value="GPCR_Rhodpsn"/>
</dbReference>
<dbReference type="InterPro" id="IPR017452">
    <property type="entry name" value="GPCR_Rhodpsn_7TM"/>
</dbReference>
<dbReference type="InterPro" id="IPR000025">
    <property type="entry name" value="Melatonin_rcpt"/>
</dbReference>
<dbReference type="PANTHER" id="PTHR24228">
    <property type="entry name" value="B2 BRADYKININ RECEPTOR/ANGIOTENSIN II RECEPTOR"/>
    <property type="match status" value="1"/>
</dbReference>
<dbReference type="PANTHER" id="PTHR24228:SF49">
    <property type="entry name" value="MELATONIN RECEPTOR TYPE 1A-LIKE"/>
    <property type="match status" value="1"/>
</dbReference>
<dbReference type="Pfam" id="PF00001">
    <property type="entry name" value="7tm_1"/>
    <property type="match status" value="1"/>
</dbReference>
<dbReference type="PRINTS" id="PR00237">
    <property type="entry name" value="GPCRRHODOPSN"/>
</dbReference>
<dbReference type="PRINTS" id="PR00857">
    <property type="entry name" value="MELATONINR"/>
</dbReference>
<dbReference type="SUPFAM" id="SSF81321">
    <property type="entry name" value="Family A G protein-coupled receptor-like"/>
    <property type="match status" value="1"/>
</dbReference>
<dbReference type="PROSITE" id="PS50262">
    <property type="entry name" value="G_PROTEIN_RECEP_F1_2"/>
    <property type="match status" value="1"/>
</dbReference>
<name>MTR1A_XENLA</name>
<feature type="chain" id="PRO_0000069869" description="Melatonin receptor type 1A X2.0">
    <location>
        <begin position="1" status="less than"/>
        <end position="153" status="greater than"/>
    </location>
</feature>
<feature type="topological domain" description="Cytoplasmic" evidence="2">
    <location>
        <begin position="1" status="less than"/>
        <end position="12"/>
    </location>
</feature>
<feature type="transmembrane region" description="Helical; Name=4" evidence="2">
    <location>
        <begin position="13"/>
        <end position="33"/>
    </location>
</feature>
<feature type="topological domain" description="Extracellular" evidence="2">
    <location>
        <begin position="34"/>
        <end position="57"/>
    </location>
</feature>
<feature type="transmembrane region" description="Helical; Name=5" evidence="2">
    <location>
        <begin position="58"/>
        <end position="78"/>
    </location>
</feature>
<feature type="topological domain" description="Cytoplasmic" evidence="2">
    <location>
        <begin position="79"/>
        <end position="112"/>
    </location>
</feature>
<feature type="transmembrane region" description="Helical; Name=6" evidence="2">
    <location>
        <begin position="113"/>
        <end position="133"/>
    </location>
</feature>
<feature type="topological domain" description="Extracellular" evidence="2">
    <location>
        <begin position="134"/>
        <end position="145"/>
    </location>
</feature>
<feature type="transmembrane region" description="Helical; Name=7" evidence="2">
    <location>
        <begin position="146"/>
        <end position="153" status="greater than"/>
    </location>
</feature>
<feature type="non-terminal residue">
    <location>
        <position position="1"/>
    </location>
</feature>
<feature type="non-terminal residue">
    <location>
        <position position="153"/>
    </location>
</feature>
<keyword id="KW-1003">Cell membrane</keyword>
<keyword id="KW-0297">G-protein coupled receptor</keyword>
<keyword id="KW-0472">Membrane</keyword>
<keyword id="KW-0675">Receptor</keyword>
<keyword id="KW-1185">Reference proteome</keyword>
<keyword id="KW-0807">Transducer</keyword>
<keyword id="KW-0812">Transmembrane</keyword>
<keyword id="KW-1133">Transmembrane helix</keyword>
<comment type="function">
    <text evidence="1">High affinity receptor for melatonin. The activity of this receptor is mediated by pertussis toxin sensitive G proteins that inhibits adenylate cyclase activity (By similarity).</text>
</comment>
<comment type="subcellular location">
    <subcellularLocation>
        <location>Cell membrane</location>
        <topology>Multi-pass membrane protein</topology>
    </subcellularLocation>
</comment>
<comment type="similarity">
    <text evidence="3">Belongs to the G-protein coupled receptor 1 family.</text>
</comment>
<protein>
    <recommendedName>
        <fullName>Melatonin receptor type 1A X2.0</fullName>
        <shortName>Mel-1A-R X2.0</shortName>
        <shortName>Mel1a receptor X2.0</shortName>
    </recommendedName>
</protein>